<accession>A0AIU6</accession>
<dbReference type="EC" id="2.7.1.48" evidence="1"/>
<dbReference type="EMBL" id="AM263198">
    <property type="protein sequence ID" value="CAK20928.1"/>
    <property type="molecule type" value="Genomic_DNA"/>
</dbReference>
<dbReference type="RefSeq" id="WP_011702300.1">
    <property type="nucleotide sequence ID" value="NC_008555.1"/>
</dbReference>
<dbReference type="SMR" id="A0AIU6"/>
<dbReference type="STRING" id="386043.lwe1510"/>
<dbReference type="GeneID" id="61189386"/>
<dbReference type="KEGG" id="lwe:lwe1510"/>
<dbReference type="eggNOG" id="COG0572">
    <property type="taxonomic scope" value="Bacteria"/>
</dbReference>
<dbReference type="HOGENOM" id="CLU_021278_1_2_9"/>
<dbReference type="OrthoDB" id="9777642at2"/>
<dbReference type="UniPathway" id="UPA00574">
    <property type="reaction ID" value="UER00637"/>
</dbReference>
<dbReference type="UniPathway" id="UPA00579">
    <property type="reaction ID" value="UER00640"/>
</dbReference>
<dbReference type="Proteomes" id="UP000000779">
    <property type="component" value="Chromosome"/>
</dbReference>
<dbReference type="GO" id="GO:0005737">
    <property type="term" value="C:cytoplasm"/>
    <property type="evidence" value="ECO:0007669"/>
    <property type="project" value="UniProtKB-SubCell"/>
</dbReference>
<dbReference type="GO" id="GO:0005524">
    <property type="term" value="F:ATP binding"/>
    <property type="evidence" value="ECO:0007669"/>
    <property type="project" value="UniProtKB-UniRule"/>
</dbReference>
<dbReference type="GO" id="GO:0043771">
    <property type="term" value="F:cytidine kinase activity"/>
    <property type="evidence" value="ECO:0007669"/>
    <property type="project" value="RHEA"/>
</dbReference>
<dbReference type="GO" id="GO:0004849">
    <property type="term" value="F:uridine kinase activity"/>
    <property type="evidence" value="ECO:0007669"/>
    <property type="project" value="UniProtKB-UniRule"/>
</dbReference>
<dbReference type="GO" id="GO:0044211">
    <property type="term" value="P:CTP salvage"/>
    <property type="evidence" value="ECO:0007669"/>
    <property type="project" value="UniProtKB-UniRule"/>
</dbReference>
<dbReference type="GO" id="GO:0044206">
    <property type="term" value="P:UMP salvage"/>
    <property type="evidence" value="ECO:0007669"/>
    <property type="project" value="UniProtKB-UniRule"/>
</dbReference>
<dbReference type="CDD" id="cd02023">
    <property type="entry name" value="UMPK"/>
    <property type="match status" value="1"/>
</dbReference>
<dbReference type="Gene3D" id="3.40.50.300">
    <property type="entry name" value="P-loop containing nucleotide triphosphate hydrolases"/>
    <property type="match status" value="1"/>
</dbReference>
<dbReference type="HAMAP" id="MF_00551">
    <property type="entry name" value="Uridine_kinase"/>
    <property type="match status" value="1"/>
</dbReference>
<dbReference type="InterPro" id="IPR027417">
    <property type="entry name" value="P-loop_NTPase"/>
</dbReference>
<dbReference type="InterPro" id="IPR006083">
    <property type="entry name" value="PRK/URK"/>
</dbReference>
<dbReference type="InterPro" id="IPR026008">
    <property type="entry name" value="Uridine_kinase"/>
</dbReference>
<dbReference type="InterPro" id="IPR000764">
    <property type="entry name" value="Uridine_kinase-like"/>
</dbReference>
<dbReference type="NCBIfam" id="NF004018">
    <property type="entry name" value="PRK05480.1"/>
    <property type="match status" value="1"/>
</dbReference>
<dbReference type="NCBIfam" id="TIGR00235">
    <property type="entry name" value="udk"/>
    <property type="match status" value="1"/>
</dbReference>
<dbReference type="PANTHER" id="PTHR10285">
    <property type="entry name" value="URIDINE KINASE"/>
    <property type="match status" value="1"/>
</dbReference>
<dbReference type="Pfam" id="PF00485">
    <property type="entry name" value="PRK"/>
    <property type="match status" value="1"/>
</dbReference>
<dbReference type="PRINTS" id="PR00988">
    <property type="entry name" value="URIDINKINASE"/>
</dbReference>
<dbReference type="SUPFAM" id="SSF52540">
    <property type="entry name" value="P-loop containing nucleoside triphosphate hydrolases"/>
    <property type="match status" value="1"/>
</dbReference>
<protein>
    <recommendedName>
        <fullName evidence="1">Uridine kinase</fullName>
        <ecNumber evidence="1">2.7.1.48</ecNumber>
    </recommendedName>
    <alternativeName>
        <fullName evidence="1">Cytidine monophosphokinase</fullName>
    </alternativeName>
    <alternativeName>
        <fullName evidence="1">Uridine monophosphokinase</fullName>
    </alternativeName>
</protein>
<name>URK_LISW6</name>
<sequence>MTKKPIVVGVTGGSGSGKTSVTKAICDHFSGHSILMIAQDVYYHDQTDISFEDRLKVNYDHPLAFDTDLLISHIAALRRYETIEKPIYDYEKYTRKQEVEIQEPREVIILEGILILEDKRLRDLMDIKVYVDTDDDIRFIRRLLRDMKERGRTMDSVIDQYLSVVKPMHNEFIEPTKKFADIIIPEGGENHVAIDLMTTKIESILQKHV</sequence>
<proteinExistence type="inferred from homology"/>
<keyword id="KW-0067">ATP-binding</keyword>
<keyword id="KW-0963">Cytoplasm</keyword>
<keyword id="KW-0418">Kinase</keyword>
<keyword id="KW-0547">Nucleotide-binding</keyword>
<keyword id="KW-0808">Transferase</keyword>
<gene>
    <name evidence="1" type="primary">udk</name>
    <name type="ordered locus">lwe1510</name>
</gene>
<reference key="1">
    <citation type="journal article" date="2006" name="J. Bacteriol.">
        <title>Whole-genome sequence of Listeria welshimeri reveals common steps in genome reduction with Listeria innocua as compared to Listeria monocytogenes.</title>
        <authorList>
            <person name="Hain T."/>
            <person name="Steinweg C."/>
            <person name="Kuenne C.T."/>
            <person name="Billion A."/>
            <person name="Ghai R."/>
            <person name="Chatterjee S.S."/>
            <person name="Domann E."/>
            <person name="Kaerst U."/>
            <person name="Goesmann A."/>
            <person name="Bekel T."/>
            <person name="Bartels D."/>
            <person name="Kaiser O."/>
            <person name="Meyer F."/>
            <person name="Puehler A."/>
            <person name="Weisshaar B."/>
            <person name="Wehland J."/>
            <person name="Liang C."/>
            <person name="Dandekar T."/>
            <person name="Lampidis R."/>
            <person name="Kreft J."/>
            <person name="Goebel W."/>
            <person name="Chakraborty T."/>
        </authorList>
    </citation>
    <scope>NUCLEOTIDE SEQUENCE [LARGE SCALE GENOMIC DNA]</scope>
    <source>
        <strain>ATCC 35897 / DSM 20650 / CCUG 15529 / CIP 8149 / NCTC 11857 / SLCC 5334 / V8</strain>
    </source>
</reference>
<feature type="chain" id="PRO_1000017884" description="Uridine kinase">
    <location>
        <begin position="1"/>
        <end position="209"/>
    </location>
</feature>
<feature type="binding site" evidence="1">
    <location>
        <begin position="12"/>
        <end position="19"/>
    </location>
    <ligand>
        <name>ATP</name>
        <dbReference type="ChEBI" id="CHEBI:30616"/>
    </ligand>
</feature>
<comment type="catalytic activity">
    <reaction evidence="1">
        <text>uridine + ATP = UMP + ADP + H(+)</text>
        <dbReference type="Rhea" id="RHEA:16825"/>
        <dbReference type="ChEBI" id="CHEBI:15378"/>
        <dbReference type="ChEBI" id="CHEBI:16704"/>
        <dbReference type="ChEBI" id="CHEBI:30616"/>
        <dbReference type="ChEBI" id="CHEBI:57865"/>
        <dbReference type="ChEBI" id="CHEBI:456216"/>
        <dbReference type="EC" id="2.7.1.48"/>
    </reaction>
</comment>
<comment type="catalytic activity">
    <reaction evidence="1">
        <text>cytidine + ATP = CMP + ADP + H(+)</text>
        <dbReference type="Rhea" id="RHEA:24674"/>
        <dbReference type="ChEBI" id="CHEBI:15378"/>
        <dbReference type="ChEBI" id="CHEBI:17562"/>
        <dbReference type="ChEBI" id="CHEBI:30616"/>
        <dbReference type="ChEBI" id="CHEBI:60377"/>
        <dbReference type="ChEBI" id="CHEBI:456216"/>
        <dbReference type="EC" id="2.7.1.48"/>
    </reaction>
</comment>
<comment type="pathway">
    <text evidence="1">Pyrimidine metabolism; CTP biosynthesis via salvage pathway; CTP from cytidine: step 1/3.</text>
</comment>
<comment type="pathway">
    <text evidence="1">Pyrimidine metabolism; UMP biosynthesis via salvage pathway; UMP from uridine: step 1/1.</text>
</comment>
<comment type="subcellular location">
    <subcellularLocation>
        <location evidence="1">Cytoplasm</location>
    </subcellularLocation>
</comment>
<comment type="similarity">
    <text evidence="1">Belongs to the uridine kinase family.</text>
</comment>
<evidence type="ECO:0000255" key="1">
    <source>
        <dbReference type="HAMAP-Rule" id="MF_00551"/>
    </source>
</evidence>
<organism>
    <name type="scientific">Listeria welshimeri serovar 6b (strain ATCC 35897 / DSM 20650 / CCUG 15529 / CIP 8149 / NCTC 11857 / SLCC 5334 / V8)</name>
    <dbReference type="NCBI Taxonomy" id="386043"/>
    <lineage>
        <taxon>Bacteria</taxon>
        <taxon>Bacillati</taxon>
        <taxon>Bacillota</taxon>
        <taxon>Bacilli</taxon>
        <taxon>Bacillales</taxon>
        <taxon>Listeriaceae</taxon>
        <taxon>Listeria</taxon>
    </lineage>
</organism>